<dbReference type="EC" id="3.5.1.4"/>
<dbReference type="EMBL" id="BA000022">
    <property type="protein sequence ID" value="BAA10524.1"/>
    <property type="molecule type" value="Genomic_DNA"/>
</dbReference>
<dbReference type="PIR" id="S75789">
    <property type="entry name" value="S75789"/>
</dbReference>
<dbReference type="SMR" id="Q55424"/>
<dbReference type="IntAct" id="Q55424">
    <property type="interactions" value="1"/>
</dbReference>
<dbReference type="STRING" id="1148.gene:10500028"/>
<dbReference type="PaxDb" id="1148-1001278"/>
<dbReference type="EnsemblBacteria" id="BAA10524">
    <property type="protein sequence ID" value="BAA10524"/>
    <property type="gene ID" value="BAA10524"/>
</dbReference>
<dbReference type="KEGG" id="syn:sll0828"/>
<dbReference type="eggNOG" id="COG0154">
    <property type="taxonomic scope" value="Bacteria"/>
</dbReference>
<dbReference type="InParanoid" id="Q55424"/>
<dbReference type="PhylomeDB" id="Q55424"/>
<dbReference type="Proteomes" id="UP000001425">
    <property type="component" value="Chromosome"/>
</dbReference>
<dbReference type="GO" id="GO:0004040">
    <property type="term" value="F:amidase activity"/>
    <property type="evidence" value="ECO:0007669"/>
    <property type="project" value="UniProtKB-EC"/>
</dbReference>
<dbReference type="Gene3D" id="3.90.1300.10">
    <property type="entry name" value="Amidase signature (AS) domain"/>
    <property type="match status" value="1"/>
</dbReference>
<dbReference type="InterPro" id="IPR000120">
    <property type="entry name" value="Amidase"/>
</dbReference>
<dbReference type="InterPro" id="IPR020556">
    <property type="entry name" value="Amidase_CS"/>
</dbReference>
<dbReference type="InterPro" id="IPR023631">
    <property type="entry name" value="Amidase_dom"/>
</dbReference>
<dbReference type="InterPro" id="IPR036928">
    <property type="entry name" value="AS_sf"/>
</dbReference>
<dbReference type="PANTHER" id="PTHR11895:SF7">
    <property type="entry name" value="GLUTAMYL-TRNA(GLN) AMIDOTRANSFERASE SUBUNIT A, MITOCHONDRIAL"/>
    <property type="match status" value="1"/>
</dbReference>
<dbReference type="PANTHER" id="PTHR11895">
    <property type="entry name" value="TRANSAMIDASE"/>
    <property type="match status" value="1"/>
</dbReference>
<dbReference type="Pfam" id="PF01425">
    <property type="entry name" value="Amidase"/>
    <property type="match status" value="1"/>
</dbReference>
<dbReference type="SUPFAM" id="SSF75304">
    <property type="entry name" value="Amidase signature (AS) enzymes"/>
    <property type="match status" value="1"/>
</dbReference>
<dbReference type="PROSITE" id="PS00571">
    <property type="entry name" value="AMIDASES"/>
    <property type="match status" value="1"/>
</dbReference>
<keyword id="KW-0378">Hydrolase</keyword>
<keyword id="KW-1185">Reference proteome</keyword>
<accession>Q55424</accession>
<gene>
    <name type="ordered locus">sll0828</name>
</gene>
<sequence>MRRQADRESVLPDYVKVLKPLPFNFSNFSNRQLFANFKMTDFCLLSALDLAQLVRTRQVSPLEITQYYLDRLGKYDQTVGSFAHVAWESAIADAKQKTKYLAGMGNSEPLPPFFGVPIAVKDLNCVADMPVSYGVSALKENLATYDDGVVAKMKAAGFTIVGKTVTSQLGSFPYTEPPGFLPARNPWHLDYNAGGSSGGSAAAVAAGLVPIAQGSDGGGSVRTPAACCSLVGFKPSRGRVSQAPVGDYQSGIACHGPLSRTVLEAAALLDVMEGYITGDPYWLPSPDRPFVETTGETPGQLRLAYAFSLPPFSSSSEIQGAVAKVIAVCENLGHQLEEACFDVTSLIEPFAQIWKAGVGASGIPLPLLESVNQWLGETSGTAGDYLRGVRNMQVISRQIVGFMEQYDALILPVFNHRPPKIGEWTHLSPPDVVQKIIEWIAPCPPANAAGLPAIAIPVGFDDQGLPLSVQIIGKPAADALVLALAHQMEQQLQGNQPRQLPLQFMP</sequence>
<protein>
    <recommendedName>
        <fullName>Putative amidase</fullName>
        <ecNumber>3.5.1.4</ecNumber>
    </recommendedName>
</protein>
<feature type="chain" id="PRO_0000105262" description="Putative amidase">
    <location>
        <begin position="1"/>
        <end position="506"/>
    </location>
</feature>
<feature type="active site" description="Charge relay system" evidence="1">
    <location>
        <position position="121"/>
    </location>
</feature>
<feature type="active site" description="Charge relay system" evidence="1">
    <location>
        <position position="196"/>
    </location>
</feature>
<feature type="active site" description="Acyl-ester intermediate" evidence="1">
    <location>
        <position position="220"/>
    </location>
</feature>
<name>AMID_SYNY3</name>
<reference key="1">
    <citation type="journal article" date="1995" name="DNA Res.">
        <title>Sequence analysis of the genome of the unicellular cyanobacterium Synechocystis sp. strain PCC6803. I. Sequence features in the 1 Mb region from map positions 64% to 92% of the genome.</title>
        <authorList>
            <person name="Kaneko T."/>
            <person name="Tanaka A."/>
            <person name="Sato S."/>
            <person name="Kotani H."/>
            <person name="Sazuka T."/>
            <person name="Miyajima N."/>
            <person name="Sugiura M."/>
            <person name="Tabata S."/>
        </authorList>
    </citation>
    <scope>NUCLEOTIDE SEQUENCE [LARGE SCALE GENOMIC DNA]</scope>
    <source>
        <strain>ATCC 27184 / PCC 6803 / N-1</strain>
    </source>
</reference>
<reference key="2">
    <citation type="journal article" date="1996" name="DNA Res.">
        <title>Sequence analysis of the genome of the unicellular cyanobacterium Synechocystis sp. strain PCC6803. II. Sequence determination of the entire genome and assignment of potential protein-coding regions.</title>
        <authorList>
            <person name="Kaneko T."/>
            <person name="Sato S."/>
            <person name="Kotani H."/>
            <person name="Tanaka A."/>
            <person name="Asamizu E."/>
            <person name="Nakamura Y."/>
            <person name="Miyajima N."/>
            <person name="Hirosawa M."/>
            <person name="Sugiura M."/>
            <person name="Sasamoto S."/>
            <person name="Kimura T."/>
            <person name="Hosouchi T."/>
            <person name="Matsuno A."/>
            <person name="Muraki A."/>
            <person name="Nakazaki N."/>
            <person name="Naruo K."/>
            <person name="Okumura S."/>
            <person name="Shimpo S."/>
            <person name="Takeuchi C."/>
            <person name="Wada T."/>
            <person name="Watanabe A."/>
            <person name="Yamada M."/>
            <person name="Yasuda M."/>
            <person name="Tabata S."/>
        </authorList>
    </citation>
    <scope>NUCLEOTIDE SEQUENCE [LARGE SCALE GENOMIC DNA]</scope>
    <source>
        <strain>ATCC 27184 / PCC 6803 / Kazusa</strain>
    </source>
</reference>
<proteinExistence type="inferred from homology"/>
<comment type="catalytic activity">
    <reaction>
        <text>a monocarboxylic acid amide + H2O = a monocarboxylate + NH4(+)</text>
        <dbReference type="Rhea" id="RHEA:12020"/>
        <dbReference type="ChEBI" id="CHEBI:15377"/>
        <dbReference type="ChEBI" id="CHEBI:28938"/>
        <dbReference type="ChEBI" id="CHEBI:35757"/>
        <dbReference type="ChEBI" id="CHEBI:83628"/>
        <dbReference type="EC" id="3.5.1.4"/>
    </reaction>
</comment>
<comment type="similarity">
    <text evidence="2">Belongs to the amidase family.</text>
</comment>
<organism>
    <name type="scientific">Synechocystis sp. (strain ATCC 27184 / PCC 6803 / Kazusa)</name>
    <dbReference type="NCBI Taxonomy" id="1111708"/>
    <lineage>
        <taxon>Bacteria</taxon>
        <taxon>Bacillati</taxon>
        <taxon>Cyanobacteriota</taxon>
        <taxon>Cyanophyceae</taxon>
        <taxon>Synechococcales</taxon>
        <taxon>Merismopediaceae</taxon>
        <taxon>Synechocystis</taxon>
    </lineage>
</organism>
<evidence type="ECO:0000250" key="1"/>
<evidence type="ECO:0000305" key="2"/>